<sequence>MDQPKAVAPNAVVEIKTPTGAPVRIGNGEKLSIIAGPCQMESRQHALETAHALKEMADRLGVGLIYKTSYDKANRTSANAQRGIGLKDSLAIFQEIREVTGLPTLTDVHETSHCSIVAEAVDVIQIPAFLCRQTDLLVAAASTGRAINIKKGQFLAPWDMKNVIAKVTGAGNPNVMACERGASFGYNTLVSDMRALPIMKEIGCPVVFDATHSVQQPGGQGTSSGGQREFVPTLARAAVAVGVACVFIETHPDPDNAPSDGPNMVPVKEFEALVANLLRYDALTKAA</sequence>
<dbReference type="EC" id="2.5.1.55" evidence="1"/>
<dbReference type="EMBL" id="CP001340">
    <property type="protein sequence ID" value="ACL94961.1"/>
    <property type="molecule type" value="Genomic_DNA"/>
</dbReference>
<dbReference type="RefSeq" id="WP_010919305.1">
    <property type="nucleotide sequence ID" value="NC_011916.1"/>
</dbReference>
<dbReference type="RefSeq" id="YP_002516869.1">
    <property type="nucleotide sequence ID" value="NC_011916.1"/>
</dbReference>
<dbReference type="SMR" id="B8H5A9"/>
<dbReference type="GeneID" id="7333170"/>
<dbReference type="KEGG" id="ccs:CCNA_01496"/>
<dbReference type="PATRIC" id="fig|565050.3.peg.1474"/>
<dbReference type="HOGENOM" id="CLU_036666_0_0_5"/>
<dbReference type="OrthoDB" id="9776934at2"/>
<dbReference type="PhylomeDB" id="B8H5A9"/>
<dbReference type="UniPathway" id="UPA00030"/>
<dbReference type="UniPathway" id="UPA00357">
    <property type="reaction ID" value="UER00474"/>
</dbReference>
<dbReference type="Proteomes" id="UP000001364">
    <property type="component" value="Chromosome"/>
</dbReference>
<dbReference type="GO" id="GO:0005737">
    <property type="term" value="C:cytoplasm"/>
    <property type="evidence" value="ECO:0007669"/>
    <property type="project" value="UniProtKB-SubCell"/>
</dbReference>
<dbReference type="GO" id="GO:0008676">
    <property type="term" value="F:3-deoxy-8-phosphooctulonate synthase activity"/>
    <property type="evidence" value="ECO:0007669"/>
    <property type="project" value="UniProtKB-UniRule"/>
</dbReference>
<dbReference type="GO" id="GO:0019294">
    <property type="term" value="P:keto-3-deoxy-D-manno-octulosonic acid biosynthetic process"/>
    <property type="evidence" value="ECO:0007669"/>
    <property type="project" value="UniProtKB-UniRule"/>
</dbReference>
<dbReference type="Gene3D" id="3.20.20.70">
    <property type="entry name" value="Aldolase class I"/>
    <property type="match status" value="1"/>
</dbReference>
<dbReference type="HAMAP" id="MF_00056">
    <property type="entry name" value="KDO8P_synth"/>
    <property type="match status" value="1"/>
</dbReference>
<dbReference type="InterPro" id="IPR013785">
    <property type="entry name" value="Aldolase_TIM"/>
</dbReference>
<dbReference type="InterPro" id="IPR006218">
    <property type="entry name" value="DAHP1/KDSA"/>
</dbReference>
<dbReference type="InterPro" id="IPR006269">
    <property type="entry name" value="KDO8P_synthase"/>
</dbReference>
<dbReference type="NCBIfam" id="TIGR01362">
    <property type="entry name" value="KDO8P_synth"/>
    <property type="match status" value="1"/>
</dbReference>
<dbReference type="NCBIfam" id="NF003543">
    <property type="entry name" value="PRK05198.1"/>
    <property type="match status" value="1"/>
</dbReference>
<dbReference type="PANTHER" id="PTHR21057">
    <property type="entry name" value="PHOSPHO-2-DEHYDRO-3-DEOXYHEPTONATE ALDOLASE"/>
    <property type="match status" value="1"/>
</dbReference>
<dbReference type="Pfam" id="PF00793">
    <property type="entry name" value="DAHP_synth_1"/>
    <property type="match status" value="1"/>
</dbReference>
<dbReference type="SUPFAM" id="SSF51569">
    <property type="entry name" value="Aldolase"/>
    <property type="match status" value="1"/>
</dbReference>
<reference key="1">
    <citation type="journal article" date="2010" name="J. Bacteriol.">
        <title>The genetic basis of laboratory adaptation in Caulobacter crescentus.</title>
        <authorList>
            <person name="Marks M.E."/>
            <person name="Castro-Rojas C.M."/>
            <person name="Teiling C."/>
            <person name="Du L."/>
            <person name="Kapatral V."/>
            <person name="Walunas T.L."/>
            <person name="Crosson S."/>
        </authorList>
    </citation>
    <scope>NUCLEOTIDE SEQUENCE [LARGE SCALE GENOMIC DNA]</scope>
    <source>
        <strain>NA1000 / CB15N</strain>
    </source>
</reference>
<organism>
    <name type="scientific">Caulobacter vibrioides (strain NA1000 / CB15N)</name>
    <name type="common">Caulobacter crescentus</name>
    <dbReference type="NCBI Taxonomy" id="565050"/>
    <lineage>
        <taxon>Bacteria</taxon>
        <taxon>Pseudomonadati</taxon>
        <taxon>Pseudomonadota</taxon>
        <taxon>Alphaproteobacteria</taxon>
        <taxon>Caulobacterales</taxon>
        <taxon>Caulobacteraceae</taxon>
        <taxon>Caulobacter</taxon>
    </lineage>
</organism>
<evidence type="ECO:0000255" key="1">
    <source>
        <dbReference type="HAMAP-Rule" id="MF_00056"/>
    </source>
</evidence>
<gene>
    <name evidence="1" type="primary">kdsA</name>
    <name type="ordered locus">CCNA_01496</name>
</gene>
<proteinExistence type="inferred from homology"/>
<keyword id="KW-0963">Cytoplasm</keyword>
<keyword id="KW-0448">Lipopolysaccharide biosynthesis</keyword>
<keyword id="KW-1185">Reference proteome</keyword>
<keyword id="KW-0808">Transferase</keyword>
<feature type="chain" id="PRO_1000117772" description="2-dehydro-3-deoxyphosphooctonate aldolase">
    <location>
        <begin position="1"/>
        <end position="287"/>
    </location>
</feature>
<comment type="catalytic activity">
    <reaction evidence="1">
        <text>D-arabinose 5-phosphate + phosphoenolpyruvate + H2O = 3-deoxy-alpha-D-manno-2-octulosonate-8-phosphate + phosphate</text>
        <dbReference type="Rhea" id="RHEA:14053"/>
        <dbReference type="ChEBI" id="CHEBI:15377"/>
        <dbReference type="ChEBI" id="CHEBI:43474"/>
        <dbReference type="ChEBI" id="CHEBI:57693"/>
        <dbReference type="ChEBI" id="CHEBI:58702"/>
        <dbReference type="ChEBI" id="CHEBI:85985"/>
        <dbReference type="EC" id="2.5.1.55"/>
    </reaction>
</comment>
<comment type="pathway">
    <text evidence="1">Carbohydrate biosynthesis; 3-deoxy-D-manno-octulosonate biosynthesis; 3-deoxy-D-manno-octulosonate from D-ribulose 5-phosphate: step 2/3.</text>
</comment>
<comment type="pathway">
    <text evidence="1">Bacterial outer membrane biogenesis; lipopolysaccharide biosynthesis.</text>
</comment>
<comment type="subcellular location">
    <subcellularLocation>
        <location evidence="1">Cytoplasm</location>
    </subcellularLocation>
</comment>
<comment type="similarity">
    <text evidence="1">Belongs to the KdsA family.</text>
</comment>
<accession>B8H5A9</accession>
<protein>
    <recommendedName>
        <fullName evidence="1">2-dehydro-3-deoxyphosphooctonate aldolase</fullName>
        <ecNumber evidence="1">2.5.1.55</ecNumber>
    </recommendedName>
    <alternativeName>
        <fullName evidence="1">3-deoxy-D-manno-octulosonic acid 8-phosphate synthase</fullName>
    </alternativeName>
    <alternativeName>
        <fullName evidence="1">KDO-8-phosphate synthase</fullName>
        <shortName evidence="1">KDO 8-P synthase</shortName>
        <shortName evidence="1">KDOPS</shortName>
    </alternativeName>
    <alternativeName>
        <fullName evidence="1">Phospho-2-dehydro-3-deoxyoctonate aldolase</fullName>
    </alternativeName>
</protein>
<name>KDSA_CAUVN</name>